<protein>
    <recommendedName>
        <fullName evidence="1">Histidine--tRNA ligase</fullName>
        <ecNumber evidence="1">6.1.1.21</ecNumber>
    </recommendedName>
    <alternativeName>
        <fullName evidence="1">Histidyl-tRNA synthetase</fullName>
        <shortName evidence="1">HisRS</shortName>
    </alternativeName>
</protein>
<reference key="1">
    <citation type="submission" date="2006-01" db="EMBL/GenBank/DDBJ databases">
        <title>Complete sequence of Novosphingobium aromaticivorans DSM 12444.</title>
        <authorList>
            <consortium name="US DOE Joint Genome Institute"/>
            <person name="Copeland A."/>
            <person name="Lucas S."/>
            <person name="Lapidus A."/>
            <person name="Barry K."/>
            <person name="Detter J.C."/>
            <person name="Glavina T."/>
            <person name="Hammon N."/>
            <person name="Israni S."/>
            <person name="Pitluck S."/>
            <person name="Chain P."/>
            <person name="Malfatti S."/>
            <person name="Shin M."/>
            <person name="Vergez L."/>
            <person name="Schmutz J."/>
            <person name="Larimer F."/>
            <person name="Land M."/>
            <person name="Kyrpides N."/>
            <person name="Ivanova N."/>
            <person name="Fredrickson J."/>
            <person name="Balkwill D."/>
            <person name="Romine M.F."/>
            <person name="Richardson P."/>
        </authorList>
    </citation>
    <scope>NUCLEOTIDE SEQUENCE [LARGE SCALE GENOMIC DNA]</scope>
    <source>
        <strain>ATCC 700278 / DSM 12444 / CCUG 56034 / CIP 105152 / NBRC 16084 / F199</strain>
    </source>
</reference>
<keyword id="KW-0030">Aminoacyl-tRNA synthetase</keyword>
<keyword id="KW-0067">ATP-binding</keyword>
<keyword id="KW-0963">Cytoplasm</keyword>
<keyword id="KW-0436">Ligase</keyword>
<keyword id="KW-0547">Nucleotide-binding</keyword>
<keyword id="KW-0648">Protein biosynthesis</keyword>
<keyword id="KW-1185">Reference proteome</keyword>
<comment type="catalytic activity">
    <reaction evidence="1">
        <text>tRNA(His) + L-histidine + ATP = L-histidyl-tRNA(His) + AMP + diphosphate + H(+)</text>
        <dbReference type="Rhea" id="RHEA:17313"/>
        <dbReference type="Rhea" id="RHEA-COMP:9665"/>
        <dbReference type="Rhea" id="RHEA-COMP:9689"/>
        <dbReference type="ChEBI" id="CHEBI:15378"/>
        <dbReference type="ChEBI" id="CHEBI:30616"/>
        <dbReference type="ChEBI" id="CHEBI:33019"/>
        <dbReference type="ChEBI" id="CHEBI:57595"/>
        <dbReference type="ChEBI" id="CHEBI:78442"/>
        <dbReference type="ChEBI" id="CHEBI:78527"/>
        <dbReference type="ChEBI" id="CHEBI:456215"/>
        <dbReference type="EC" id="6.1.1.21"/>
    </reaction>
</comment>
<comment type="subunit">
    <text evidence="1">Homodimer.</text>
</comment>
<comment type="subcellular location">
    <subcellularLocation>
        <location evidence="1">Cytoplasm</location>
    </subcellularLocation>
</comment>
<comment type="similarity">
    <text evidence="1">Belongs to the class-II aminoacyl-tRNA synthetase family.</text>
</comment>
<feature type="chain" id="PRO_1000016404" description="Histidine--tRNA ligase">
    <location>
        <begin position="1"/>
        <end position="419"/>
    </location>
</feature>
<gene>
    <name evidence="1" type="primary">hisS</name>
    <name type="ordered locus">Saro_0289</name>
</gene>
<name>SYH_NOVAD</name>
<evidence type="ECO:0000255" key="1">
    <source>
        <dbReference type="HAMAP-Rule" id="MF_00127"/>
    </source>
</evidence>
<accession>Q2GBN6</accession>
<organism>
    <name type="scientific">Novosphingobium aromaticivorans (strain ATCC 700278 / DSM 12444 / CCUG 56034 / CIP 105152 / NBRC 16084 / F199)</name>
    <dbReference type="NCBI Taxonomy" id="279238"/>
    <lineage>
        <taxon>Bacteria</taxon>
        <taxon>Pseudomonadati</taxon>
        <taxon>Pseudomonadota</taxon>
        <taxon>Alphaproteobacteria</taxon>
        <taxon>Sphingomonadales</taxon>
        <taxon>Sphingomonadaceae</taxon>
        <taxon>Novosphingobium</taxon>
    </lineage>
</organism>
<proteinExistence type="inferred from homology"/>
<sequence>MSTQTPQPIRGTQDIFGPDAEAFAFVVETFERVRKLYRFRRVEMPVFEKTAVFSRSLGETTDVVSKEMYSFEDRGGESLTLRPEFTAGIARAYLTDGWQQYAPLKVATHGPLFRYERPQKGRYRQFHQIDAEIIGAGEPQADVELLVMADQLLKELGIGANDPGAVTLQLNTLGDGASREAWRAALVEYFRAHKAELSEDSQDRLERNPLRILDSKDPRDKPFTADAPRIDDFLSAEAQDFFGKVTSGLDAAGVEWTRAPALVRGLDYYRHTAFEFVTDRLGAQGTVLGGGRYDGLMEALGGAATPAVGWAAGIERLAMLVGEKGEARTDVIVVVEDDALLTSGIEQVSRLRREGVSAELVASGSARKRFDKAVKMGAKAILALAMRDGQPAARFRVEDDAATALRGQLEAAVAKYGAQ</sequence>
<dbReference type="EC" id="6.1.1.21" evidence="1"/>
<dbReference type="EMBL" id="CP000248">
    <property type="protein sequence ID" value="ABD24737.1"/>
    <property type="molecule type" value="Genomic_DNA"/>
</dbReference>
<dbReference type="RefSeq" id="WP_011443951.1">
    <property type="nucleotide sequence ID" value="NC_007794.1"/>
</dbReference>
<dbReference type="SMR" id="Q2GBN6"/>
<dbReference type="STRING" id="279238.Saro_0289"/>
<dbReference type="KEGG" id="nar:Saro_0289"/>
<dbReference type="eggNOG" id="COG0124">
    <property type="taxonomic scope" value="Bacteria"/>
</dbReference>
<dbReference type="HOGENOM" id="CLU_025113_1_0_5"/>
<dbReference type="Proteomes" id="UP000009134">
    <property type="component" value="Chromosome"/>
</dbReference>
<dbReference type="GO" id="GO:0005737">
    <property type="term" value="C:cytoplasm"/>
    <property type="evidence" value="ECO:0007669"/>
    <property type="project" value="UniProtKB-SubCell"/>
</dbReference>
<dbReference type="GO" id="GO:0005524">
    <property type="term" value="F:ATP binding"/>
    <property type="evidence" value="ECO:0007669"/>
    <property type="project" value="UniProtKB-UniRule"/>
</dbReference>
<dbReference type="GO" id="GO:0004821">
    <property type="term" value="F:histidine-tRNA ligase activity"/>
    <property type="evidence" value="ECO:0007669"/>
    <property type="project" value="UniProtKB-UniRule"/>
</dbReference>
<dbReference type="GO" id="GO:0006427">
    <property type="term" value="P:histidyl-tRNA aminoacylation"/>
    <property type="evidence" value="ECO:0007669"/>
    <property type="project" value="UniProtKB-UniRule"/>
</dbReference>
<dbReference type="CDD" id="cd00773">
    <property type="entry name" value="HisRS-like_core"/>
    <property type="match status" value="1"/>
</dbReference>
<dbReference type="Gene3D" id="3.40.50.800">
    <property type="entry name" value="Anticodon-binding domain"/>
    <property type="match status" value="1"/>
</dbReference>
<dbReference type="Gene3D" id="3.30.930.10">
    <property type="entry name" value="Bira Bifunctional Protein, Domain 2"/>
    <property type="match status" value="1"/>
</dbReference>
<dbReference type="HAMAP" id="MF_00127">
    <property type="entry name" value="His_tRNA_synth"/>
    <property type="match status" value="1"/>
</dbReference>
<dbReference type="InterPro" id="IPR006195">
    <property type="entry name" value="aa-tRNA-synth_II"/>
</dbReference>
<dbReference type="InterPro" id="IPR045864">
    <property type="entry name" value="aa-tRNA-synth_II/BPL/LPL"/>
</dbReference>
<dbReference type="InterPro" id="IPR036621">
    <property type="entry name" value="Anticodon-bd_dom_sf"/>
</dbReference>
<dbReference type="InterPro" id="IPR015807">
    <property type="entry name" value="His-tRNA-ligase"/>
</dbReference>
<dbReference type="InterPro" id="IPR041715">
    <property type="entry name" value="HisRS-like_core"/>
</dbReference>
<dbReference type="InterPro" id="IPR004516">
    <property type="entry name" value="HisRS/HisZ"/>
</dbReference>
<dbReference type="NCBIfam" id="TIGR00442">
    <property type="entry name" value="hisS"/>
    <property type="match status" value="1"/>
</dbReference>
<dbReference type="PANTHER" id="PTHR43707:SF1">
    <property type="entry name" value="HISTIDINE--TRNA LIGASE, MITOCHONDRIAL-RELATED"/>
    <property type="match status" value="1"/>
</dbReference>
<dbReference type="PANTHER" id="PTHR43707">
    <property type="entry name" value="HISTIDYL-TRNA SYNTHETASE"/>
    <property type="match status" value="1"/>
</dbReference>
<dbReference type="Pfam" id="PF13393">
    <property type="entry name" value="tRNA-synt_His"/>
    <property type="match status" value="1"/>
</dbReference>
<dbReference type="PIRSF" id="PIRSF001549">
    <property type="entry name" value="His-tRNA_synth"/>
    <property type="match status" value="1"/>
</dbReference>
<dbReference type="SUPFAM" id="SSF55681">
    <property type="entry name" value="Class II aaRS and biotin synthetases"/>
    <property type="match status" value="1"/>
</dbReference>
<dbReference type="PROSITE" id="PS50862">
    <property type="entry name" value="AA_TRNA_LIGASE_II"/>
    <property type="match status" value="1"/>
</dbReference>